<feature type="chain" id="PRO_0000147974" description="Phosphoglucosamine mutase">
    <location>
        <begin position="1"/>
        <end position="450"/>
    </location>
</feature>
<feature type="active site" description="Phosphoserine intermediate" evidence="1">
    <location>
        <position position="101"/>
    </location>
</feature>
<feature type="binding site" description="via phosphate group" evidence="1">
    <location>
        <position position="101"/>
    </location>
    <ligand>
        <name>Mg(2+)</name>
        <dbReference type="ChEBI" id="CHEBI:18420"/>
    </ligand>
</feature>
<feature type="binding site" evidence="1">
    <location>
        <position position="240"/>
    </location>
    <ligand>
        <name>Mg(2+)</name>
        <dbReference type="ChEBI" id="CHEBI:18420"/>
    </ligand>
</feature>
<feature type="binding site" evidence="1">
    <location>
        <position position="242"/>
    </location>
    <ligand>
        <name>Mg(2+)</name>
        <dbReference type="ChEBI" id="CHEBI:18420"/>
    </ligand>
</feature>
<feature type="binding site" evidence="1">
    <location>
        <position position="244"/>
    </location>
    <ligand>
        <name>Mg(2+)</name>
        <dbReference type="ChEBI" id="CHEBI:18420"/>
    </ligand>
</feature>
<feature type="modified residue" description="Phosphoserine" evidence="1">
    <location>
        <position position="101"/>
    </location>
</feature>
<sequence length="450" mass="48123">MGKYFGTDGVRGEANLELTPELAFKLGRFGGYVLSQHETEAPKVFVGRDTRISGEMLESALVAGLLSVGIHVYKLGVLATPAVAYLVETEGASAGVMISASHNPALDNGIKFFGGDGFKLDDEKEAEIEALLDAEEDTLPRPSAEGLGILVDYPEGLRKYEGYLVSTGTPLDGMKVALDTANGAASTSARQIFADLGAQLTVIGETPDGLNINLNVGSTHPEALQEVVKESGSAIGLAFDGDSDRLIAVDENGDIVDGDKIMYIIGKYLSKKGQLAQNTIVTTVMSNLGFHKALNREGINKAVTAVGDRYVVEEMRKSGYNLGGEQSGHVILMDYNTTGDGQLSAVQLTKIMKETGKSLSELAAEVTIYPQKLVNIRVENVMKEKAMEVPAIKAIIEKMEEEMAGNGRILVRPSGTEPLLRVMAEAPTTEEVDYYVDTITDVVRAEIGID</sequence>
<reference key="1">
    <citation type="journal article" date="2001" name="J. Bacteriol.">
        <title>Genome of the bacterium Streptococcus pneumoniae strain R6.</title>
        <authorList>
            <person name="Hoskins J."/>
            <person name="Alborn W.E. Jr."/>
            <person name="Arnold J."/>
            <person name="Blaszczak L.C."/>
            <person name="Burgett S."/>
            <person name="DeHoff B.S."/>
            <person name="Estrem S.T."/>
            <person name="Fritz L."/>
            <person name="Fu D.-J."/>
            <person name="Fuller W."/>
            <person name="Geringer C."/>
            <person name="Gilmour R."/>
            <person name="Glass J.S."/>
            <person name="Khoja H."/>
            <person name="Kraft A.R."/>
            <person name="Lagace R.E."/>
            <person name="LeBlanc D.J."/>
            <person name="Lee L.N."/>
            <person name="Lefkowitz E.J."/>
            <person name="Lu J."/>
            <person name="Matsushima P."/>
            <person name="McAhren S.M."/>
            <person name="McHenney M."/>
            <person name="McLeaster K."/>
            <person name="Mundy C.W."/>
            <person name="Nicas T.I."/>
            <person name="Norris F.H."/>
            <person name="O'Gara M."/>
            <person name="Peery R.B."/>
            <person name="Robertson G.T."/>
            <person name="Rockey P."/>
            <person name="Sun P.-M."/>
            <person name="Winkler M.E."/>
            <person name="Yang Y."/>
            <person name="Young-Bellido M."/>
            <person name="Zhao G."/>
            <person name="Zook C.A."/>
            <person name="Baltz R.H."/>
            <person name="Jaskunas S.R."/>
            <person name="Rosteck P.R. Jr."/>
            <person name="Skatrud P.L."/>
            <person name="Glass J.I."/>
        </authorList>
    </citation>
    <scope>NUCLEOTIDE SEQUENCE [LARGE SCALE GENOMIC DNA]</scope>
    <source>
        <strain>ATCC BAA-255 / R6</strain>
    </source>
</reference>
<reference key="2">
    <citation type="journal article" date="2005" name="FEBS J.">
        <title>Characterization of a eukaryotic type serine/threonine protein kinase and protein phosphatase of Streptococcus pneumoniae and identification of kinase substrates.</title>
        <authorList>
            <person name="Novakova L."/>
            <person name="Saskova L."/>
            <person name="Pallova P."/>
            <person name="Janecek J."/>
            <person name="Novotna J."/>
            <person name="Ulrych A."/>
            <person name="Echenique J."/>
            <person name="Trombe M.C."/>
            <person name="Branny P."/>
        </authorList>
    </citation>
    <scope>PHOSPHORYLATION</scope>
    <scope>IDENTIFICATION BY MASS SPECTROMETRY</scope>
</reference>
<gene>
    <name evidence="1" type="primary">glmM</name>
    <name type="ordered locus">spr1417</name>
</gene>
<protein>
    <recommendedName>
        <fullName evidence="1">Phosphoglucosamine mutase</fullName>
        <ecNumber evidence="1">5.4.2.10</ecNumber>
    </recommendedName>
</protein>
<organism>
    <name type="scientific">Streptococcus pneumoniae (strain ATCC BAA-255 / R6)</name>
    <dbReference type="NCBI Taxonomy" id="171101"/>
    <lineage>
        <taxon>Bacteria</taxon>
        <taxon>Bacillati</taxon>
        <taxon>Bacillota</taxon>
        <taxon>Bacilli</taxon>
        <taxon>Lactobacillales</taxon>
        <taxon>Streptococcaceae</taxon>
        <taxon>Streptococcus</taxon>
    </lineage>
</organism>
<dbReference type="EC" id="5.4.2.10" evidence="1"/>
<dbReference type="EMBL" id="AE007317">
    <property type="protein sequence ID" value="AAL00221.1"/>
    <property type="molecule type" value="Genomic_DNA"/>
</dbReference>
<dbReference type="PIR" id="H98048">
    <property type="entry name" value="H98048"/>
</dbReference>
<dbReference type="RefSeq" id="NP_359010.1">
    <property type="nucleotide sequence ID" value="NC_003098.1"/>
</dbReference>
<dbReference type="RefSeq" id="WP_000521416.1">
    <property type="nucleotide sequence ID" value="NC_003098.1"/>
</dbReference>
<dbReference type="SMR" id="Q8DP16"/>
<dbReference type="STRING" id="171101.spr1417"/>
<dbReference type="KEGG" id="spr:spr1417"/>
<dbReference type="PATRIC" id="fig|171101.6.peg.1533"/>
<dbReference type="eggNOG" id="COG1109">
    <property type="taxonomic scope" value="Bacteria"/>
</dbReference>
<dbReference type="HOGENOM" id="CLU_016950_7_0_9"/>
<dbReference type="Proteomes" id="UP000000586">
    <property type="component" value="Chromosome"/>
</dbReference>
<dbReference type="GO" id="GO:0005829">
    <property type="term" value="C:cytosol"/>
    <property type="evidence" value="ECO:0000318"/>
    <property type="project" value="GO_Central"/>
</dbReference>
<dbReference type="GO" id="GO:0000287">
    <property type="term" value="F:magnesium ion binding"/>
    <property type="evidence" value="ECO:0007669"/>
    <property type="project" value="UniProtKB-UniRule"/>
</dbReference>
<dbReference type="GO" id="GO:0008966">
    <property type="term" value="F:phosphoglucosamine mutase activity"/>
    <property type="evidence" value="ECO:0000318"/>
    <property type="project" value="GO_Central"/>
</dbReference>
<dbReference type="GO" id="GO:0004615">
    <property type="term" value="F:phosphomannomutase activity"/>
    <property type="evidence" value="ECO:0000318"/>
    <property type="project" value="GO_Central"/>
</dbReference>
<dbReference type="GO" id="GO:0005975">
    <property type="term" value="P:carbohydrate metabolic process"/>
    <property type="evidence" value="ECO:0007669"/>
    <property type="project" value="InterPro"/>
</dbReference>
<dbReference type="GO" id="GO:0009252">
    <property type="term" value="P:peptidoglycan biosynthetic process"/>
    <property type="evidence" value="ECO:0000318"/>
    <property type="project" value="GO_Central"/>
</dbReference>
<dbReference type="GO" id="GO:0006048">
    <property type="term" value="P:UDP-N-acetylglucosamine biosynthetic process"/>
    <property type="evidence" value="ECO:0000318"/>
    <property type="project" value="GO_Central"/>
</dbReference>
<dbReference type="CDD" id="cd05802">
    <property type="entry name" value="GlmM"/>
    <property type="match status" value="1"/>
</dbReference>
<dbReference type="FunFam" id="3.30.310.50:FF:000001">
    <property type="entry name" value="Phosphoglucosamine mutase"/>
    <property type="match status" value="1"/>
</dbReference>
<dbReference type="FunFam" id="3.40.120.10:FF:000001">
    <property type="entry name" value="Phosphoglucosamine mutase"/>
    <property type="match status" value="1"/>
</dbReference>
<dbReference type="FunFam" id="3.40.120.10:FF:000002">
    <property type="entry name" value="Phosphoglucosamine mutase"/>
    <property type="match status" value="1"/>
</dbReference>
<dbReference type="Gene3D" id="3.40.120.10">
    <property type="entry name" value="Alpha-D-Glucose-1,6-Bisphosphate, subunit A, domain 3"/>
    <property type="match status" value="3"/>
</dbReference>
<dbReference type="Gene3D" id="3.30.310.50">
    <property type="entry name" value="Alpha-D-phosphohexomutase, C-terminal domain"/>
    <property type="match status" value="1"/>
</dbReference>
<dbReference type="HAMAP" id="MF_01554_B">
    <property type="entry name" value="GlmM_B"/>
    <property type="match status" value="1"/>
</dbReference>
<dbReference type="InterPro" id="IPR005844">
    <property type="entry name" value="A-D-PHexomutase_a/b/a-I"/>
</dbReference>
<dbReference type="InterPro" id="IPR016055">
    <property type="entry name" value="A-D-PHexomutase_a/b/a-I/II/III"/>
</dbReference>
<dbReference type="InterPro" id="IPR005845">
    <property type="entry name" value="A-D-PHexomutase_a/b/a-II"/>
</dbReference>
<dbReference type="InterPro" id="IPR005846">
    <property type="entry name" value="A-D-PHexomutase_a/b/a-III"/>
</dbReference>
<dbReference type="InterPro" id="IPR005843">
    <property type="entry name" value="A-D-PHexomutase_C"/>
</dbReference>
<dbReference type="InterPro" id="IPR036900">
    <property type="entry name" value="A-D-PHexomutase_C_sf"/>
</dbReference>
<dbReference type="InterPro" id="IPR016066">
    <property type="entry name" value="A-D-PHexomutase_CS"/>
</dbReference>
<dbReference type="InterPro" id="IPR005841">
    <property type="entry name" value="Alpha-D-phosphohexomutase_SF"/>
</dbReference>
<dbReference type="InterPro" id="IPR006352">
    <property type="entry name" value="GlmM_bact"/>
</dbReference>
<dbReference type="InterPro" id="IPR050060">
    <property type="entry name" value="Phosphoglucosamine_mutase"/>
</dbReference>
<dbReference type="NCBIfam" id="TIGR01455">
    <property type="entry name" value="glmM"/>
    <property type="match status" value="1"/>
</dbReference>
<dbReference type="PANTHER" id="PTHR42946:SF1">
    <property type="entry name" value="PHOSPHOGLUCOMUTASE (ALPHA-D-GLUCOSE-1,6-BISPHOSPHATE-DEPENDENT)"/>
    <property type="match status" value="1"/>
</dbReference>
<dbReference type="PANTHER" id="PTHR42946">
    <property type="entry name" value="PHOSPHOHEXOSE MUTASE"/>
    <property type="match status" value="1"/>
</dbReference>
<dbReference type="Pfam" id="PF02878">
    <property type="entry name" value="PGM_PMM_I"/>
    <property type="match status" value="1"/>
</dbReference>
<dbReference type="Pfam" id="PF02879">
    <property type="entry name" value="PGM_PMM_II"/>
    <property type="match status" value="1"/>
</dbReference>
<dbReference type="Pfam" id="PF02880">
    <property type="entry name" value="PGM_PMM_III"/>
    <property type="match status" value="1"/>
</dbReference>
<dbReference type="Pfam" id="PF00408">
    <property type="entry name" value="PGM_PMM_IV"/>
    <property type="match status" value="1"/>
</dbReference>
<dbReference type="PRINTS" id="PR00509">
    <property type="entry name" value="PGMPMM"/>
</dbReference>
<dbReference type="SUPFAM" id="SSF55957">
    <property type="entry name" value="Phosphoglucomutase, C-terminal domain"/>
    <property type="match status" value="1"/>
</dbReference>
<dbReference type="SUPFAM" id="SSF53738">
    <property type="entry name" value="Phosphoglucomutase, first 3 domains"/>
    <property type="match status" value="3"/>
</dbReference>
<dbReference type="PROSITE" id="PS00710">
    <property type="entry name" value="PGM_PMM"/>
    <property type="match status" value="1"/>
</dbReference>
<name>GLMM_STRR6</name>
<evidence type="ECO:0000255" key="1">
    <source>
        <dbReference type="HAMAP-Rule" id="MF_01554"/>
    </source>
</evidence>
<evidence type="ECO:0000269" key="2">
    <source>
    </source>
</evidence>
<proteinExistence type="evidence at protein level"/>
<accession>Q8DP16</accession>
<comment type="function">
    <text evidence="1">Catalyzes the conversion of glucosamine-6-phosphate to glucosamine-1-phosphate.</text>
</comment>
<comment type="catalytic activity">
    <reaction evidence="1">
        <text>alpha-D-glucosamine 1-phosphate = D-glucosamine 6-phosphate</text>
        <dbReference type="Rhea" id="RHEA:23424"/>
        <dbReference type="ChEBI" id="CHEBI:58516"/>
        <dbReference type="ChEBI" id="CHEBI:58725"/>
        <dbReference type="EC" id="5.4.2.10"/>
    </reaction>
</comment>
<comment type="cofactor">
    <cofactor evidence="1">
        <name>Mg(2+)</name>
        <dbReference type="ChEBI" id="CHEBI:18420"/>
    </cofactor>
    <text evidence="1">Binds 1 Mg(2+) ion per subunit.</text>
</comment>
<comment type="PTM">
    <text evidence="1 2">Activated by phosphorylation (By similarity). Phosphorylated by StkP in vivo.</text>
</comment>
<comment type="similarity">
    <text evidence="1">Belongs to the phosphohexose mutase family.</text>
</comment>
<keyword id="KW-0413">Isomerase</keyword>
<keyword id="KW-0460">Magnesium</keyword>
<keyword id="KW-0479">Metal-binding</keyword>
<keyword id="KW-0597">Phosphoprotein</keyword>
<keyword id="KW-1185">Reference proteome</keyword>